<comment type="catalytic activity">
    <reaction evidence="1">
        <text>tRNA(Gly) + glycine + ATP = glycyl-tRNA(Gly) + AMP + diphosphate</text>
        <dbReference type="Rhea" id="RHEA:16013"/>
        <dbReference type="Rhea" id="RHEA-COMP:9664"/>
        <dbReference type="Rhea" id="RHEA-COMP:9683"/>
        <dbReference type="ChEBI" id="CHEBI:30616"/>
        <dbReference type="ChEBI" id="CHEBI:33019"/>
        <dbReference type="ChEBI" id="CHEBI:57305"/>
        <dbReference type="ChEBI" id="CHEBI:78442"/>
        <dbReference type="ChEBI" id="CHEBI:78522"/>
        <dbReference type="ChEBI" id="CHEBI:456215"/>
        <dbReference type="EC" id="6.1.1.14"/>
    </reaction>
</comment>
<comment type="subunit">
    <text evidence="1">Tetramer of two alpha and two beta subunits.</text>
</comment>
<comment type="subcellular location">
    <subcellularLocation>
        <location evidence="1">Cytoplasm</location>
    </subcellularLocation>
</comment>
<comment type="similarity">
    <text evidence="1">Belongs to the class-II aminoacyl-tRNA synthetase family.</text>
</comment>
<sequence>MQKFDTRTFQGLILTLQDYWARQGCTIVQPLDMEVGAGTSHPMTCLRALGPEPMAAAYVQPSRRPTDGRYGENPNRLQHYYQFQVVIKPSPDNIQELYLGSLKELGMDPTIHDIRFVEDNWENPTLGAWGLGWEVWLNGMEVTQFTYFQQVGGLECKPVTGEITYGLERLAMYIQGVDSVYDLVWSDGPLGKTTYGDVFHQNEVEQSTYNFEYADVDFLFTCFEQYEKEAQQLLALENPLPLPAYERILKAAHSFNLLDARKAISVTERQRYILRIRTLTKAVAEAYYASREALGFPMCNKDK</sequence>
<protein>
    <recommendedName>
        <fullName evidence="1">Glycine--tRNA ligase alpha subunit</fullName>
        <ecNumber evidence="1">6.1.1.14</ecNumber>
    </recommendedName>
    <alternativeName>
        <fullName evidence="1">Glycyl-tRNA synthetase alpha subunit</fullName>
        <shortName evidence="1">GlyRS</shortName>
    </alternativeName>
</protein>
<gene>
    <name evidence="1" type="primary">glyQ</name>
    <name type="ordered locus">SBO_3565</name>
</gene>
<dbReference type="EC" id="6.1.1.14" evidence="1"/>
<dbReference type="EMBL" id="CP000036">
    <property type="protein sequence ID" value="ABB68047.1"/>
    <property type="molecule type" value="Genomic_DNA"/>
</dbReference>
<dbReference type="RefSeq" id="WP_001168544.1">
    <property type="nucleotide sequence ID" value="NC_007613.1"/>
</dbReference>
<dbReference type="SMR" id="Q31V61"/>
<dbReference type="GeneID" id="93778290"/>
<dbReference type="KEGG" id="sbo:SBO_3565"/>
<dbReference type="HOGENOM" id="CLU_057066_1_0_6"/>
<dbReference type="Proteomes" id="UP000007067">
    <property type="component" value="Chromosome"/>
</dbReference>
<dbReference type="GO" id="GO:0005829">
    <property type="term" value="C:cytosol"/>
    <property type="evidence" value="ECO:0007669"/>
    <property type="project" value="TreeGrafter"/>
</dbReference>
<dbReference type="GO" id="GO:0005524">
    <property type="term" value="F:ATP binding"/>
    <property type="evidence" value="ECO:0007669"/>
    <property type="project" value="UniProtKB-UniRule"/>
</dbReference>
<dbReference type="GO" id="GO:0004820">
    <property type="term" value="F:glycine-tRNA ligase activity"/>
    <property type="evidence" value="ECO:0007669"/>
    <property type="project" value="UniProtKB-UniRule"/>
</dbReference>
<dbReference type="GO" id="GO:0006426">
    <property type="term" value="P:glycyl-tRNA aminoacylation"/>
    <property type="evidence" value="ECO:0007669"/>
    <property type="project" value="UniProtKB-UniRule"/>
</dbReference>
<dbReference type="CDD" id="cd00733">
    <property type="entry name" value="GlyRS_alpha_core"/>
    <property type="match status" value="1"/>
</dbReference>
<dbReference type="FunFam" id="1.20.58.180:FF:000001">
    <property type="entry name" value="Glycine--tRNA ligase alpha subunit"/>
    <property type="match status" value="1"/>
</dbReference>
<dbReference type="FunFam" id="3.30.930.10:FF:000006">
    <property type="entry name" value="Glycine--tRNA ligase alpha subunit"/>
    <property type="match status" value="1"/>
</dbReference>
<dbReference type="Gene3D" id="3.30.930.10">
    <property type="entry name" value="Bira Bifunctional Protein, Domain 2"/>
    <property type="match status" value="1"/>
</dbReference>
<dbReference type="Gene3D" id="1.20.58.180">
    <property type="entry name" value="Class II aaRS and biotin synthetases, domain 2"/>
    <property type="match status" value="1"/>
</dbReference>
<dbReference type="HAMAP" id="MF_00254">
    <property type="entry name" value="Gly_tRNA_synth_alpha"/>
    <property type="match status" value="1"/>
</dbReference>
<dbReference type="InterPro" id="IPR045864">
    <property type="entry name" value="aa-tRNA-synth_II/BPL/LPL"/>
</dbReference>
<dbReference type="InterPro" id="IPR006194">
    <property type="entry name" value="Gly-tRNA-synth_heterodimer"/>
</dbReference>
<dbReference type="InterPro" id="IPR002310">
    <property type="entry name" value="Gly-tRNA_ligase_asu"/>
</dbReference>
<dbReference type="NCBIfam" id="TIGR00388">
    <property type="entry name" value="glyQ"/>
    <property type="match status" value="1"/>
</dbReference>
<dbReference type="NCBIfam" id="NF006827">
    <property type="entry name" value="PRK09348.1"/>
    <property type="match status" value="1"/>
</dbReference>
<dbReference type="PANTHER" id="PTHR30075:SF2">
    <property type="entry name" value="GLYCINE--TRNA LIGASE, CHLOROPLASTIC_MITOCHONDRIAL 2"/>
    <property type="match status" value="1"/>
</dbReference>
<dbReference type="PANTHER" id="PTHR30075">
    <property type="entry name" value="GLYCYL-TRNA SYNTHETASE"/>
    <property type="match status" value="1"/>
</dbReference>
<dbReference type="Pfam" id="PF02091">
    <property type="entry name" value="tRNA-synt_2e"/>
    <property type="match status" value="1"/>
</dbReference>
<dbReference type="PRINTS" id="PR01044">
    <property type="entry name" value="TRNASYNTHGA"/>
</dbReference>
<dbReference type="SUPFAM" id="SSF55681">
    <property type="entry name" value="Class II aaRS and biotin synthetases"/>
    <property type="match status" value="1"/>
</dbReference>
<dbReference type="PROSITE" id="PS50861">
    <property type="entry name" value="AA_TRNA_LIGASE_II_GLYAB"/>
    <property type="match status" value="1"/>
</dbReference>
<evidence type="ECO:0000255" key="1">
    <source>
        <dbReference type="HAMAP-Rule" id="MF_00254"/>
    </source>
</evidence>
<organism>
    <name type="scientific">Shigella boydii serotype 4 (strain Sb227)</name>
    <dbReference type="NCBI Taxonomy" id="300268"/>
    <lineage>
        <taxon>Bacteria</taxon>
        <taxon>Pseudomonadati</taxon>
        <taxon>Pseudomonadota</taxon>
        <taxon>Gammaproteobacteria</taxon>
        <taxon>Enterobacterales</taxon>
        <taxon>Enterobacteriaceae</taxon>
        <taxon>Shigella</taxon>
    </lineage>
</organism>
<reference key="1">
    <citation type="journal article" date="2005" name="Nucleic Acids Res.">
        <title>Genome dynamics and diversity of Shigella species, the etiologic agents of bacillary dysentery.</title>
        <authorList>
            <person name="Yang F."/>
            <person name="Yang J."/>
            <person name="Zhang X."/>
            <person name="Chen L."/>
            <person name="Jiang Y."/>
            <person name="Yan Y."/>
            <person name="Tang X."/>
            <person name="Wang J."/>
            <person name="Xiong Z."/>
            <person name="Dong J."/>
            <person name="Xue Y."/>
            <person name="Zhu Y."/>
            <person name="Xu X."/>
            <person name="Sun L."/>
            <person name="Chen S."/>
            <person name="Nie H."/>
            <person name="Peng J."/>
            <person name="Xu J."/>
            <person name="Wang Y."/>
            <person name="Yuan Z."/>
            <person name="Wen Y."/>
            <person name="Yao Z."/>
            <person name="Shen Y."/>
            <person name="Qiang B."/>
            <person name="Hou Y."/>
            <person name="Yu J."/>
            <person name="Jin Q."/>
        </authorList>
    </citation>
    <scope>NUCLEOTIDE SEQUENCE [LARGE SCALE GENOMIC DNA]</scope>
    <source>
        <strain>Sb227</strain>
    </source>
</reference>
<feature type="chain" id="PRO_1000047493" description="Glycine--tRNA ligase alpha subunit">
    <location>
        <begin position="1"/>
        <end position="303"/>
    </location>
</feature>
<proteinExistence type="inferred from homology"/>
<accession>Q31V61</accession>
<name>SYGA_SHIBS</name>
<keyword id="KW-0030">Aminoacyl-tRNA synthetase</keyword>
<keyword id="KW-0067">ATP-binding</keyword>
<keyword id="KW-0963">Cytoplasm</keyword>
<keyword id="KW-0436">Ligase</keyword>
<keyword id="KW-0547">Nucleotide-binding</keyword>
<keyword id="KW-0648">Protein biosynthesis</keyword>